<protein>
    <recommendedName>
        <fullName evidence="1">Phosphopantetheine adenylyltransferase</fullName>
        <ecNumber evidence="1">2.7.7.3</ecNumber>
    </recommendedName>
    <alternativeName>
        <fullName evidence="1">Dephospho-CoA pyrophosphorylase</fullName>
    </alternativeName>
    <alternativeName>
        <fullName evidence="1">Pantetheine-phosphate adenylyltransferase</fullName>
        <shortName evidence="1">PPAT</shortName>
    </alternativeName>
</protein>
<proteinExistence type="inferred from homology"/>
<sequence>MTSIAISSGSFDPITLGHLDIIKRGAKVFDEVYVVVLNNSSKKPFFSVEERLDLIREATKDIPNVKVDSHSGLLVEYAKMRNANAILRGLRAVSDFEYEMQITSMNRKLDENIETFFIMTNNQYSFLSSSIVKEVARYGGSVVDLVPPVVERALKEKFQTPLK</sequence>
<gene>
    <name evidence="1" type="primary">coaD</name>
    <name type="ordered locus">BA_4139</name>
    <name type="ordered locus">GBAA_4139</name>
    <name type="ordered locus">BAS3841</name>
</gene>
<name>COAD_BACAN</name>
<comment type="function">
    <text evidence="1">Reversibly transfers an adenylyl group from ATP to 4'-phosphopantetheine, yielding dephospho-CoA (dPCoA) and pyrophosphate.</text>
</comment>
<comment type="catalytic activity">
    <reaction evidence="1">
        <text>(R)-4'-phosphopantetheine + ATP + H(+) = 3'-dephospho-CoA + diphosphate</text>
        <dbReference type="Rhea" id="RHEA:19801"/>
        <dbReference type="ChEBI" id="CHEBI:15378"/>
        <dbReference type="ChEBI" id="CHEBI:30616"/>
        <dbReference type="ChEBI" id="CHEBI:33019"/>
        <dbReference type="ChEBI" id="CHEBI:57328"/>
        <dbReference type="ChEBI" id="CHEBI:61723"/>
        <dbReference type="EC" id="2.7.7.3"/>
    </reaction>
</comment>
<comment type="cofactor">
    <cofactor evidence="1">
        <name>Mg(2+)</name>
        <dbReference type="ChEBI" id="CHEBI:18420"/>
    </cofactor>
</comment>
<comment type="pathway">
    <text evidence="1">Cofactor biosynthesis; coenzyme A biosynthesis; CoA from (R)-pantothenate: step 4/5.</text>
</comment>
<comment type="subunit">
    <text evidence="1">Homohexamer.</text>
</comment>
<comment type="subcellular location">
    <subcellularLocation>
        <location evidence="1">Cytoplasm</location>
    </subcellularLocation>
</comment>
<comment type="similarity">
    <text evidence="1">Belongs to the bacterial CoaD family.</text>
</comment>
<keyword id="KW-0067">ATP-binding</keyword>
<keyword id="KW-0173">Coenzyme A biosynthesis</keyword>
<keyword id="KW-0963">Cytoplasm</keyword>
<keyword id="KW-0460">Magnesium</keyword>
<keyword id="KW-0547">Nucleotide-binding</keyword>
<keyword id="KW-0548">Nucleotidyltransferase</keyword>
<keyword id="KW-1185">Reference proteome</keyword>
<keyword id="KW-0808">Transferase</keyword>
<feature type="chain" id="PRO_0000156161" description="Phosphopantetheine adenylyltransferase">
    <location>
        <begin position="1"/>
        <end position="163"/>
    </location>
</feature>
<feature type="binding site" evidence="1">
    <location>
        <begin position="10"/>
        <end position="11"/>
    </location>
    <ligand>
        <name>ATP</name>
        <dbReference type="ChEBI" id="CHEBI:30616"/>
    </ligand>
</feature>
<feature type="binding site" evidence="1">
    <location>
        <position position="10"/>
    </location>
    <ligand>
        <name>substrate</name>
    </ligand>
</feature>
<feature type="binding site" evidence="1">
    <location>
        <position position="18"/>
    </location>
    <ligand>
        <name>ATP</name>
        <dbReference type="ChEBI" id="CHEBI:30616"/>
    </ligand>
</feature>
<feature type="binding site" evidence="1">
    <location>
        <position position="42"/>
    </location>
    <ligand>
        <name>substrate</name>
    </ligand>
</feature>
<feature type="binding site" evidence="1">
    <location>
        <position position="74"/>
    </location>
    <ligand>
        <name>substrate</name>
    </ligand>
</feature>
<feature type="binding site" evidence="1">
    <location>
        <position position="88"/>
    </location>
    <ligand>
        <name>substrate</name>
    </ligand>
</feature>
<feature type="binding site" evidence="1">
    <location>
        <begin position="89"/>
        <end position="91"/>
    </location>
    <ligand>
        <name>ATP</name>
        <dbReference type="ChEBI" id="CHEBI:30616"/>
    </ligand>
</feature>
<feature type="binding site" evidence="1">
    <location>
        <position position="99"/>
    </location>
    <ligand>
        <name>ATP</name>
        <dbReference type="ChEBI" id="CHEBI:30616"/>
    </ligand>
</feature>
<feature type="binding site" evidence="1">
    <location>
        <begin position="124"/>
        <end position="130"/>
    </location>
    <ligand>
        <name>ATP</name>
        <dbReference type="ChEBI" id="CHEBI:30616"/>
    </ligand>
</feature>
<feature type="site" description="Transition state stabilizer" evidence="1">
    <location>
        <position position="18"/>
    </location>
</feature>
<organism>
    <name type="scientific">Bacillus anthracis</name>
    <dbReference type="NCBI Taxonomy" id="1392"/>
    <lineage>
        <taxon>Bacteria</taxon>
        <taxon>Bacillati</taxon>
        <taxon>Bacillota</taxon>
        <taxon>Bacilli</taxon>
        <taxon>Bacillales</taxon>
        <taxon>Bacillaceae</taxon>
        <taxon>Bacillus</taxon>
        <taxon>Bacillus cereus group</taxon>
    </lineage>
</organism>
<accession>Q81W43</accession>
<accession>Q6HU97</accession>
<accession>Q6KNH9</accession>
<dbReference type="EC" id="2.7.7.3" evidence="1"/>
<dbReference type="EMBL" id="AE016879">
    <property type="protein sequence ID" value="AAP27864.1"/>
    <property type="molecule type" value="Genomic_DNA"/>
</dbReference>
<dbReference type="EMBL" id="AE017334">
    <property type="protein sequence ID" value="AAT33258.1"/>
    <property type="molecule type" value="Genomic_DNA"/>
</dbReference>
<dbReference type="EMBL" id="AE017225">
    <property type="protein sequence ID" value="AAT56142.1"/>
    <property type="molecule type" value="Genomic_DNA"/>
</dbReference>
<dbReference type="RefSeq" id="NP_846378.1">
    <property type="nucleotide sequence ID" value="NC_003997.3"/>
</dbReference>
<dbReference type="RefSeq" id="WP_000200598.1">
    <property type="nucleotide sequence ID" value="NZ_WXXJ01000027.1"/>
</dbReference>
<dbReference type="RefSeq" id="YP_030091.1">
    <property type="nucleotide sequence ID" value="NC_005945.1"/>
</dbReference>
<dbReference type="SMR" id="Q81W43"/>
<dbReference type="STRING" id="261594.GBAA_4139"/>
<dbReference type="DNASU" id="1088744"/>
<dbReference type="GeneID" id="92799798"/>
<dbReference type="KEGG" id="ban:BA_4139"/>
<dbReference type="KEGG" id="bar:GBAA_4139"/>
<dbReference type="KEGG" id="bat:BAS3841"/>
<dbReference type="PATRIC" id="fig|198094.11.peg.4109"/>
<dbReference type="eggNOG" id="COG0669">
    <property type="taxonomic scope" value="Bacteria"/>
</dbReference>
<dbReference type="HOGENOM" id="CLU_100149_0_1_9"/>
<dbReference type="OMA" id="MALMNRK"/>
<dbReference type="OrthoDB" id="9806661at2"/>
<dbReference type="UniPathway" id="UPA00241">
    <property type="reaction ID" value="UER00355"/>
</dbReference>
<dbReference type="Proteomes" id="UP000000427">
    <property type="component" value="Chromosome"/>
</dbReference>
<dbReference type="Proteomes" id="UP000000594">
    <property type="component" value="Chromosome"/>
</dbReference>
<dbReference type="GO" id="GO:0005737">
    <property type="term" value="C:cytoplasm"/>
    <property type="evidence" value="ECO:0007669"/>
    <property type="project" value="UniProtKB-SubCell"/>
</dbReference>
<dbReference type="GO" id="GO:0005524">
    <property type="term" value="F:ATP binding"/>
    <property type="evidence" value="ECO:0007669"/>
    <property type="project" value="UniProtKB-KW"/>
</dbReference>
<dbReference type="GO" id="GO:0004595">
    <property type="term" value="F:pantetheine-phosphate adenylyltransferase activity"/>
    <property type="evidence" value="ECO:0007669"/>
    <property type="project" value="UniProtKB-UniRule"/>
</dbReference>
<dbReference type="GO" id="GO:0015937">
    <property type="term" value="P:coenzyme A biosynthetic process"/>
    <property type="evidence" value="ECO:0007669"/>
    <property type="project" value="UniProtKB-UniRule"/>
</dbReference>
<dbReference type="CDD" id="cd02163">
    <property type="entry name" value="PPAT"/>
    <property type="match status" value="1"/>
</dbReference>
<dbReference type="FunFam" id="3.40.50.620:FF:000012">
    <property type="entry name" value="Phosphopantetheine adenylyltransferase"/>
    <property type="match status" value="1"/>
</dbReference>
<dbReference type="Gene3D" id="3.40.50.620">
    <property type="entry name" value="HUPs"/>
    <property type="match status" value="1"/>
</dbReference>
<dbReference type="HAMAP" id="MF_00151">
    <property type="entry name" value="PPAT_bact"/>
    <property type="match status" value="1"/>
</dbReference>
<dbReference type="InterPro" id="IPR004821">
    <property type="entry name" value="Cyt_trans-like"/>
</dbReference>
<dbReference type="InterPro" id="IPR001980">
    <property type="entry name" value="PPAT"/>
</dbReference>
<dbReference type="InterPro" id="IPR014729">
    <property type="entry name" value="Rossmann-like_a/b/a_fold"/>
</dbReference>
<dbReference type="NCBIfam" id="TIGR01510">
    <property type="entry name" value="coaD_prev_kdtB"/>
    <property type="match status" value="1"/>
</dbReference>
<dbReference type="NCBIfam" id="TIGR00125">
    <property type="entry name" value="cyt_tran_rel"/>
    <property type="match status" value="1"/>
</dbReference>
<dbReference type="PANTHER" id="PTHR21342">
    <property type="entry name" value="PHOSPHOPANTETHEINE ADENYLYLTRANSFERASE"/>
    <property type="match status" value="1"/>
</dbReference>
<dbReference type="PANTHER" id="PTHR21342:SF1">
    <property type="entry name" value="PHOSPHOPANTETHEINE ADENYLYLTRANSFERASE"/>
    <property type="match status" value="1"/>
</dbReference>
<dbReference type="Pfam" id="PF01467">
    <property type="entry name" value="CTP_transf_like"/>
    <property type="match status" value="1"/>
</dbReference>
<dbReference type="PRINTS" id="PR01020">
    <property type="entry name" value="LPSBIOSNTHSS"/>
</dbReference>
<dbReference type="SUPFAM" id="SSF52374">
    <property type="entry name" value="Nucleotidylyl transferase"/>
    <property type="match status" value="1"/>
</dbReference>
<evidence type="ECO:0000255" key="1">
    <source>
        <dbReference type="HAMAP-Rule" id="MF_00151"/>
    </source>
</evidence>
<reference key="1">
    <citation type="journal article" date="2003" name="Nature">
        <title>The genome sequence of Bacillus anthracis Ames and comparison to closely related bacteria.</title>
        <authorList>
            <person name="Read T.D."/>
            <person name="Peterson S.N."/>
            <person name="Tourasse N.J."/>
            <person name="Baillie L.W."/>
            <person name="Paulsen I.T."/>
            <person name="Nelson K.E."/>
            <person name="Tettelin H."/>
            <person name="Fouts D.E."/>
            <person name="Eisen J.A."/>
            <person name="Gill S.R."/>
            <person name="Holtzapple E.K."/>
            <person name="Okstad O.A."/>
            <person name="Helgason E."/>
            <person name="Rilstone J."/>
            <person name="Wu M."/>
            <person name="Kolonay J.F."/>
            <person name="Beanan M.J."/>
            <person name="Dodson R.J."/>
            <person name="Brinkac L.M."/>
            <person name="Gwinn M.L."/>
            <person name="DeBoy R.T."/>
            <person name="Madpu R."/>
            <person name="Daugherty S.C."/>
            <person name="Durkin A.S."/>
            <person name="Haft D.H."/>
            <person name="Nelson W.C."/>
            <person name="Peterson J.D."/>
            <person name="Pop M."/>
            <person name="Khouri H.M."/>
            <person name="Radune D."/>
            <person name="Benton J.L."/>
            <person name="Mahamoud Y."/>
            <person name="Jiang L."/>
            <person name="Hance I.R."/>
            <person name="Weidman J.F."/>
            <person name="Berry K.J."/>
            <person name="Plaut R.D."/>
            <person name="Wolf A.M."/>
            <person name="Watkins K.L."/>
            <person name="Nierman W.C."/>
            <person name="Hazen A."/>
            <person name="Cline R.T."/>
            <person name="Redmond C."/>
            <person name="Thwaite J.E."/>
            <person name="White O."/>
            <person name="Salzberg S.L."/>
            <person name="Thomason B."/>
            <person name="Friedlander A.M."/>
            <person name="Koehler T.M."/>
            <person name="Hanna P.C."/>
            <person name="Kolstoe A.-B."/>
            <person name="Fraser C.M."/>
        </authorList>
    </citation>
    <scope>NUCLEOTIDE SEQUENCE [LARGE SCALE GENOMIC DNA]</scope>
    <source>
        <strain>Ames / isolate Porton</strain>
    </source>
</reference>
<reference key="2">
    <citation type="journal article" date="2009" name="J. Bacteriol.">
        <title>The complete genome sequence of Bacillus anthracis Ames 'Ancestor'.</title>
        <authorList>
            <person name="Ravel J."/>
            <person name="Jiang L."/>
            <person name="Stanley S.T."/>
            <person name="Wilson M.R."/>
            <person name="Decker R.S."/>
            <person name="Read T.D."/>
            <person name="Worsham P."/>
            <person name="Keim P.S."/>
            <person name="Salzberg S.L."/>
            <person name="Fraser-Liggett C.M."/>
            <person name="Rasko D.A."/>
        </authorList>
    </citation>
    <scope>NUCLEOTIDE SEQUENCE [LARGE SCALE GENOMIC DNA]</scope>
    <source>
        <strain>Ames ancestor</strain>
    </source>
</reference>
<reference key="3">
    <citation type="submission" date="2004-01" db="EMBL/GenBank/DDBJ databases">
        <title>Complete genome sequence of Bacillus anthracis Sterne.</title>
        <authorList>
            <person name="Brettin T.S."/>
            <person name="Bruce D."/>
            <person name="Challacombe J.F."/>
            <person name="Gilna P."/>
            <person name="Han C."/>
            <person name="Hill K."/>
            <person name="Hitchcock P."/>
            <person name="Jackson P."/>
            <person name="Keim P."/>
            <person name="Longmire J."/>
            <person name="Lucas S."/>
            <person name="Okinaka R."/>
            <person name="Richardson P."/>
            <person name="Rubin E."/>
            <person name="Tice H."/>
        </authorList>
    </citation>
    <scope>NUCLEOTIDE SEQUENCE [LARGE SCALE GENOMIC DNA]</scope>
    <source>
        <strain>Sterne</strain>
    </source>
</reference>